<accession>Q2SIW7</accession>
<feature type="chain" id="PRO_0000375314" description="YcgL domain-containing protein HCH_02617">
    <location>
        <begin position="1"/>
        <end position="106"/>
    </location>
</feature>
<feature type="domain" description="YcgL" evidence="1">
    <location>
        <begin position="6"/>
        <end position="90"/>
    </location>
</feature>
<protein>
    <recommendedName>
        <fullName evidence="1">YcgL domain-containing protein HCH_02617</fullName>
    </recommendedName>
</protein>
<organism>
    <name type="scientific">Hahella chejuensis (strain KCTC 2396)</name>
    <dbReference type="NCBI Taxonomy" id="349521"/>
    <lineage>
        <taxon>Bacteria</taxon>
        <taxon>Pseudomonadati</taxon>
        <taxon>Pseudomonadota</taxon>
        <taxon>Gammaproteobacteria</taxon>
        <taxon>Oceanospirillales</taxon>
        <taxon>Hahellaceae</taxon>
        <taxon>Hahella</taxon>
    </lineage>
</organism>
<name>Y2617_HAHCH</name>
<reference key="1">
    <citation type="journal article" date="2005" name="Nucleic Acids Res.">
        <title>Genomic blueprint of Hahella chejuensis, a marine microbe producing an algicidal agent.</title>
        <authorList>
            <person name="Jeong H."/>
            <person name="Yim J.H."/>
            <person name="Lee C."/>
            <person name="Choi S.-H."/>
            <person name="Park Y.K."/>
            <person name="Yoon S.H."/>
            <person name="Hur C.-G."/>
            <person name="Kang H.-Y."/>
            <person name="Kim D."/>
            <person name="Lee H.H."/>
            <person name="Park K.H."/>
            <person name="Park S.-H."/>
            <person name="Park H.-S."/>
            <person name="Lee H.K."/>
            <person name="Oh T.K."/>
            <person name="Kim J.F."/>
        </authorList>
    </citation>
    <scope>NUCLEOTIDE SEQUENCE [LARGE SCALE GENOMIC DNA]</scope>
    <source>
        <strain>KCTC 2396</strain>
    </source>
</reference>
<proteinExistence type="inferred from homology"/>
<gene>
    <name type="ordered locus">HCH_02617</name>
</gene>
<sequence length="106" mass="12102">MTPDRRLISIFRSSKKEEMYVYVDKKQGVGALPEALLQLFGKPQHVFDLLLTKEKPLARADAAEVMSAIDEKGFYLQMPPVQDDYMMDVVRAREQTPAVGRKDLDD</sequence>
<dbReference type="EMBL" id="CP000155">
    <property type="protein sequence ID" value="ABC29407.1"/>
    <property type="molecule type" value="Genomic_DNA"/>
</dbReference>
<dbReference type="RefSeq" id="WP_011396476.1">
    <property type="nucleotide sequence ID" value="NC_007645.1"/>
</dbReference>
<dbReference type="SMR" id="Q2SIW7"/>
<dbReference type="STRING" id="349521.HCH_02617"/>
<dbReference type="KEGG" id="hch:HCH_02617"/>
<dbReference type="eggNOG" id="COG3100">
    <property type="taxonomic scope" value="Bacteria"/>
</dbReference>
<dbReference type="HOGENOM" id="CLU_155118_2_0_6"/>
<dbReference type="OrthoDB" id="7062382at2"/>
<dbReference type="Proteomes" id="UP000000238">
    <property type="component" value="Chromosome"/>
</dbReference>
<dbReference type="Gene3D" id="3.10.510.20">
    <property type="entry name" value="YcgL domain"/>
    <property type="match status" value="1"/>
</dbReference>
<dbReference type="HAMAP" id="MF_01866">
    <property type="entry name" value="UPF0745"/>
    <property type="match status" value="1"/>
</dbReference>
<dbReference type="InterPro" id="IPR038068">
    <property type="entry name" value="YcgL-like_sf"/>
</dbReference>
<dbReference type="InterPro" id="IPR027354">
    <property type="entry name" value="YcgL_dom"/>
</dbReference>
<dbReference type="PANTHER" id="PTHR38109">
    <property type="entry name" value="PROTEIN YCGL"/>
    <property type="match status" value="1"/>
</dbReference>
<dbReference type="PANTHER" id="PTHR38109:SF1">
    <property type="entry name" value="PROTEIN YCGL"/>
    <property type="match status" value="1"/>
</dbReference>
<dbReference type="Pfam" id="PF05166">
    <property type="entry name" value="YcgL"/>
    <property type="match status" value="1"/>
</dbReference>
<dbReference type="SUPFAM" id="SSF160191">
    <property type="entry name" value="YcgL-like"/>
    <property type="match status" value="1"/>
</dbReference>
<dbReference type="PROSITE" id="PS51648">
    <property type="entry name" value="YCGL"/>
    <property type="match status" value="1"/>
</dbReference>
<evidence type="ECO:0000255" key="1">
    <source>
        <dbReference type="HAMAP-Rule" id="MF_01866"/>
    </source>
</evidence>
<keyword id="KW-1185">Reference proteome</keyword>